<name>LGT_COXBR</name>
<protein>
    <recommendedName>
        <fullName evidence="1">Phosphatidylglycerol--prolipoprotein diacylglyceryl transferase</fullName>
        <ecNumber evidence="1">2.5.1.145</ecNumber>
    </recommendedName>
</protein>
<reference key="1">
    <citation type="submission" date="2007-11" db="EMBL/GenBank/DDBJ databases">
        <title>Genome sequencing of phylogenetically and phenotypically diverse Coxiella burnetii isolates.</title>
        <authorList>
            <person name="Seshadri R."/>
            <person name="Samuel J.E."/>
        </authorList>
    </citation>
    <scope>NUCLEOTIDE SEQUENCE [LARGE SCALE GENOMIC DNA]</scope>
    <source>
        <strain>RSA 331 / Henzerling II</strain>
    </source>
</reference>
<feature type="chain" id="PRO_1000085072" description="Phosphatidylglycerol--prolipoprotein diacylglyceryl transferase">
    <location>
        <begin position="1"/>
        <end position="261"/>
    </location>
</feature>
<feature type="transmembrane region" description="Helical" evidence="1">
    <location>
        <begin position="19"/>
        <end position="39"/>
    </location>
</feature>
<feature type="transmembrane region" description="Helical" evidence="1">
    <location>
        <begin position="56"/>
        <end position="76"/>
    </location>
</feature>
<feature type="transmembrane region" description="Helical" evidence="1">
    <location>
        <begin position="92"/>
        <end position="112"/>
    </location>
</feature>
<feature type="transmembrane region" description="Helical" evidence="1">
    <location>
        <begin position="126"/>
        <end position="146"/>
    </location>
</feature>
<feature type="transmembrane region" description="Helical" evidence="1">
    <location>
        <begin position="173"/>
        <end position="193"/>
    </location>
</feature>
<feature type="transmembrane region" description="Helical" evidence="1">
    <location>
        <begin position="199"/>
        <end position="219"/>
    </location>
</feature>
<feature type="transmembrane region" description="Helical" evidence="1">
    <location>
        <begin position="227"/>
        <end position="247"/>
    </location>
</feature>
<feature type="binding site" evidence="1">
    <location>
        <position position="139"/>
    </location>
    <ligand>
        <name>a 1,2-diacyl-sn-glycero-3-phospho-(1'-sn-glycerol)</name>
        <dbReference type="ChEBI" id="CHEBI:64716"/>
    </ligand>
</feature>
<sequence length="261" mass="30102">MLYYPHIDPVAFRLGPLKVHWYGLMYLVGFAMAWGLALYRARDPKRHWTAQQVGDLIFYGALGLIIGGRLGYMLFYDFSNFIANPLTLFQVWRGGMSFHGGLIGVIVTTWIFSRRTHKRWMDVTDFVVPLVPLGLAAGRIGNFINGELWGRVTTVPWGMVFPNAGPLPRHPSQLYEFLLEGVLLFIVIWWFSAKLRPRFAVSSLFLLCYGLFRFTAEFFRQPDPQLGFVAFGWLTRGQELSLPMIIIGGFALWWAYRHKER</sequence>
<comment type="function">
    <text evidence="1">Catalyzes the transfer of the diacylglyceryl group from phosphatidylglycerol to the sulfhydryl group of the N-terminal cysteine of a prolipoprotein, the first step in the formation of mature lipoproteins.</text>
</comment>
<comment type="catalytic activity">
    <reaction evidence="1">
        <text>L-cysteinyl-[prolipoprotein] + a 1,2-diacyl-sn-glycero-3-phospho-(1'-sn-glycerol) = an S-1,2-diacyl-sn-glyceryl-L-cysteinyl-[prolipoprotein] + sn-glycerol 1-phosphate + H(+)</text>
        <dbReference type="Rhea" id="RHEA:56712"/>
        <dbReference type="Rhea" id="RHEA-COMP:14679"/>
        <dbReference type="Rhea" id="RHEA-COMP:14680"/>
        <dbReference type="ChEBI" id="CHEBI:15378"/>
        <dbReference type="ChEBI" id="CHEBI:29950"/>
        <dbReference type="ChEBI" id="CHEBI:57685"/>
        <dbReference type="ChEBI" id="CHEBI:64716"/>
        <dbReference type="ChEBI" id="CHEBI:140658"/>
        <dbReference type="EC" id="2.5.1.145"/>
    </reaction>
</comment>
<comment type="pathway">
    <text evidence="1">Protein modification; lipoprotein biosynthesis (diacylglyceryl transfer).</text>
</comment>
<comment type="subcellular location">
    <subcellularLocation>
        <location evidence="1">Cell inner membrane</location>
        <topology evidence="1">Multi-pass membrane protein</topology>
    </subcellularLocation>
</comment>
<comment type="similarity">
    <text evidence="1">Belongs to the Lgt family.</text>
</comment>
<evidence type="ECO:0000255" key="1">
    <source>
        <dbReference type="HAMAP-Rule" id="MF_01147"/>
    </source>
</evidence>
<keyword id="KW-0997">Cell inner membrane</keyword>
<keyword id="KW-1003">Cell membrane</keyword>
<keyword id="KW-0472">Membrane</keyword>
<keyword id="KW-0808">Transferase</keyword>
<keyword id="KW-0812">Transmembrane</keyword>
<keyword id="KW-1133">Transmembrane helix</keyword>
<gene>
    <name evidence="1" type="primary">lgt</name>
    <name type="ordered locus">COXBURSA331_A1733</name>
</gene>
<dbReference type="EC" id="2.5.1.145" evidence="1"/>
<dbReference type="EMBL" id="CP000890">
    <property type="protein sequence ID" value="ABX78291.1"/>
    <property type="molecule type" value="Genomic_DNA"/>
</dbReference>
<dbReference type="RefSeq" id="WP_005772080.1">
    <property type="nucleotide sequence ID" value="NC_010117.1"/>
</dbReference>
<dbReference type="SMR" id="A9N982"/>
<dbReference type="KEGG" id="cbs:COXBURSA331_A1733"/>
<dbReference type="HOGENOM" id="CLU_013386_1_0_6"/>
<dbReference type="UniPathway" id="UPA00664"/>
<dbReference type="GO" id="GO:0005886">
    <property type="term" value="C:plasma membrane"/>
    <property type="evidence" value="ECO:0007669"/>
    <property type="project" value="UniProtKB-SubCell"/>
</dbReference>
<dbReference type="GO" id="GO:0008961">
    <property type="term" value="F:phosphatidylglycerol-prolipoprotein diacylglyceryl transferase activity"/>
    <property type="evidence" value="ECO:0007669"/>
    <property type="project" value="UniProtKB-UniRule"/>
</dbReference>
<dbReference type="GO" id="GO:0042158">
    <property type="term" value="P:lipoprotein biosynthetic process"/>
    <property type="evidence" value="ECO:0007669"/>
    <property type="project" value="UniProtKB-UniRule"/>
</dbReference>
<dbReference type="HAMAP" id="MF_01147">
    <property type="entry name" value="Lgt"/>
    <property type="match status" value="1"/>
</dbReference>
<dbReference type="InterPro" id="IPR001640">
    <property type="entry name" value="Lgt"/>
</dbReference>
<dbReference type="NCBIfam" id="TIGR00544">
    <property type="entry name" value="lgt"/>
    <property type="match status" value="1"/>
</dbReference>
<dbReference type="PANTHER" id="PTHR30589:SF0">
    <property type="entry name" value="PHOSPHATIDYLGLYCEROL--PROLIPOPROTEIN DIACYLGLYCERYL TRANSFERASE"/>
    <property type="match status" value="1"/>
</dbReference>
<dbReference type="PANTHER" id="PTHR30589">
    <property type="entry name" value="PROLIPOPROTEIN DIACYLGLYCERYL TRANSFERASE"/>
    <property type="match status" value="1"/>
</dbReference>
<dbReference type="Pfam" id="PF01790">
    <property type="entry name" value="LGT"/>
    <property type="match status" value="1"/>
</dbReference>
<dbReference type="PROSITE" id="PS01311">
    <property type="entry name" value="LGT"/>
    <property type="match status" value="1"/>
</dbReference>
<proteinExistence type="inferred from homology"/>
<accession>A9N982</accession>
<organism>
    <name type="scientific">Coxiella burnetii (strain RSA 331 / Henzerling II)</name>
    <dbReference type="NCBI Taxonomy" id="360115"/>
    <lineage>
        <taxon>Bacteria</taxon>
        <taxon>Pseudomonadati</taxon>
        <taxon>Pseudomonadota</taxon>
        <taxon>Gammaproteobacteria</taxon>
        <taxon>Legionellales</taxon>
        <taxon>Coxiellaceae</taxon>
        <taxon>Coxiella</taxon>
    </lineage>
</organism>